<keyword id="KW-0004">4Fe-4S</keyword>
<keyword id="KW-0067">ATP-binding</keyword>
<keyword id="KW-0149">Chlorophyll biosynthesis</keyword>
<keyword id="KW-0408">Iron</keyword>
<keyword id="KW-0411">Iron-sulfur</keyword>
<keyword id="KW-0479">Metal-binding</keyword>
<keyword id="KW-0547">Nucleotide-binding</keyword>
<keyword id="KW-0560">Oxidoreductase</keyword>
<keyword id="KW-0602">Photosynthesis</keyword>
<keyword id="KW-1185">Reference proteome</keyword>
<comment type="function">
    <text evidence="1">Component of the dark-operative protochlorophyllide reductase (DPOR) that uses Mg-ATP and reduced ferredoxin to reduce ring D of protochlorophyllide (Pchlide) to form chlorophyllide a (Chlide). This reaction is light-independent. The NB-protein (ChlN-ChlB) is the catalytic component of the complex.</text>
</comment>
<comment type="catalytic activity">
    <reaction evidence="1">
        <text>chlorophyllide a + oxidized 2[4Fe-4S]-[ferredoxin] + 2 ADP + 2 phosphate = protochlorophyllide a + reduced 2[4Fe-4S]-[ferredoxin] + 2 ATP + 2 H2O</text>
        <dbReference type="Rhea" id="RHEA:28202"/>
        <dbReference type="Rhea" id="RHEA-COMP:10002"/>
        <dbReference type="Rhea" id="RHEA-COMP:10004"/>
        <dbReference type="ChEBI" id="CHEBI:15377"/>
        <dbReference type="ChEBI" id="CHEBI:30616"/>
        <dbReference type="ChEBI" id="CHEBI:33722"/>
        <dbReference type="ChEBI" id="CHEBI:33723"/>
        <dbReference type="ChEBI" id="CHEBI:43474"/>
        <dbReference type="ChEBI" id="CHEBI:83348"/>
        <dbReference type="ChEBI" id="CHEBI:83350"/>
        <dbReference type="ChEBI" id="CHEBI:456216"/>
        <dbReference type="EC" id="1.3.7.7"/>
    </reaction>
</comment>
<comment type="cofactor">
    <cofactor evidence="1">
        <name>[4Fe-4S] cluster</name>
        <dbReference type="ChEBI" id="CHEBI:49883"/>
    </cofactor>
    <text evidence="1">Binds 1 [4Fe-4S] cluster per heterodimer. The cluster is bound at the heterodimer interface by residues from both subunits.</text>
</comment>
<comment type="pathway">
    <text evidence="1">Porphyrin-containing compound metabolism; chlorophyll biosynthesis (light-independent).</text>
</comment>
<comment type="subunit">
    <text evidence="1">Protochlorophyllide reductase is composed of three subunits; ChlL, ChlN and ChlB. Forms a heterotetramer of two ChlB and two ChlN subunits.</text>
</comment>
<comment type="similarity">
    <text evidence="1">Belongs to the ChlB/BchB/BchZ family.</text>
</comment>
<gene>
    <name evidence="1" type="primary">chlB</name>
    <name type="ordered locus">alr3441</name>
</gene>
<dbReference type="EC" id="1.3.7.7" evidence="1"/>
<dbReference type="EMBL" id="BA000019">
    <property type="protein sequence ID" value="BAB75140.1"/>
    <property type="molecule type" value="Genomic_DNA"/>
</dbReference>
<dbReference type="PIR" id="AB2236">
    <property type="entry name" value="AB2236"/>
</dbReference>
<dbReference type="SMR" id="Q8YRK5"/>
<dbReference type="STRING" id="103690.gene:10495480"/>
<dbReference type="DNASU" id="1107039"/>
<dbReference type="KEGG" id="ana:alr3441"/>
<dbReference type="eggNOG" id="COG2710">
    <property type="taxonomic scope" value="Bacteria"/>
</dbReference>
<dbReference type="OrthoDB" id="5717231at2"/>
<dbReference type="UniPathway" id="UPA00670"/>
<dbReference type="Proteomes" id="UP000002483">
    <property type="component" value="Chromosome"/>
</dbReference>
<dbReference type="GO" id="GO:0051539">
    <property type="term" value="F:4 iron, 4 sulfur cluster binding"/>
    <property type="evidence" value="ECO:0007669"/>
    <property type="project" value="UniProtKB-UniRule"/>
</dbReference>
<dbReference type="GO" id="GO:0005524">
    <property type="term" value="F:ATP binding"/>
    <property type="evidence" value="ECO:0007669"/>
    <property type="project" value="UniProtKB-UniRule"/>
</dbReference>
<dbReference type="GO" id="GO:0046872">
    <property type="term" value="F:metal ion binding"/>
    <property type="evidence" value="ECO:0007669"/>
    <property type="project" value="UniProtKB-KW"/>
</dbReference>
<dbReference type="GO" id="GO:0016730">
    <property type="term" value="F:oxidoreductase activity, acting on iron-sulfur proteins as donors"/>
    <property type="evidence" value="ECO:0007669"/>
    <property type="project" value="InterPro"/>
</dbReference>
<dbReference type="GO" id="GO:0016636">
    <property type="term" value="F:oxidoreductase activity, acting on the CH-CH group of donors, iron-sulfur protein as acceptor"/>
    <property type="evidence" value="ECO:0007669"/>
    <property type="project" value="UniProtKB-UniRule"/>
</dbReference>
<dbReference type="GO" id="GO:0036068">
    <property type="term" value="P:light-independent chlorophyll biosynthetic process"/>
    <property type="evidence" value="ECO:0007669"/>
    <property type="project" value="UniProtKB-UniRule"/>
</dbReference>
<dbReference type="GO" id="GO:0019685">
    <property type="term" value="P:photosynthesis, dark reaction"/>
    <property type="evidence" value="ECO:0007669"/>
    <property type="project" value="InterPro"/>
</dbReference>
<dbReference type="CDD" id="cd01981">
    <property type="entry name" value="Pchlide_reductase_B"/>
    <property type="match status" value="1"/>
</dbReference>
<dbReference type="Gene3D" id="1.20.89.20">
    <property type="match status" value="1"/>
</dbReference>
<dbReference type="Gene3D" id="3.40.50.1980">
    <property type="entry name" value="Nitrogenase molybdenum iron protein domain"/>
    <property type="match status" value="3"/>
</dbReference>
<dbReference type="Gene3D" id="1.10.8.550">
    <property type="entry name" value="Proto-chlorophyllide reductase 57 kD subunit B"/>
    <property type="match status" value="1"/>
</dbReference>
<dbReference type="HAMAP" id="MF_00353">
    <property type="entry name" value="ChlB_BchB"/>
    <property type="match status" value="1"/>
</dbReference>
<dbReference type="InterPro" id="IPR050152">
    <property type="entry name" value="ChlB/BchB/BchZ"/>
</dbReference>
<dbReference type="InterPro" id="IPR013580">
    <property type="entry name" value="LI-POR_suB-like_C"/>
</dbReference>
<dbReference type="InterPro" id="IPR000510">
    <property type="entry name" value="Nase/OxRdtase_comp1"/>
</dbReference>
<dbReference type="InterPro" id="IPR042298">
    <property type="entry name" value="P-CP_red_C"/>
</dbReference>
<dbReference type="InterPro" id="IPR005969">
    <property type="entry name" value="Protochl_reductB"/>
</dbReference>
<dbReference type="InterPro" id="IPR016209">
    <property type="entry name" value="Protochlorophyllide_Rdtase"/>
</dbReference>
<dbReference type="NCBIfam" id="TIGR01278">
    <property type="entry name" value="DPOR_BchB"/>
    <property type="match status" value="1"/>
</dbReference>
<dbReference type="PANTHER" id="PTHR33712">
    <property type="entry name" value="LIGHT-INDEPENDENT PROTOCHLOROPHYLLIDE REDUCTASE SUBUNIT B"/>
    <property type="match status" value="1"/>
</dbReference>
<dbReference type="PANTHER" id="PTHR33712:SF7">
    <property type="entry name" value="LIGHT-INDEPENDENT PROTOCHLOROPHYLLIDE REDUCTASE SUBUNIT B"/>
    <property type="match status" value="1"/>
</dbReference>
<dbReference type="Pfam" id="PF00148">
    <property type="entry name" value="Oxidored_nitro"/>
    <property type="match status" value="1"/>
</dbReference>
<dbReference type="Pfam" id="PF08369">
    <property type="entry name" value="PCP_red"/>
    <property type="match status" value="1"/>
</dbReference>
<dbReference type="PIRSF" id="PIRSF000163">
    <property type="entry name" value="PCP_ChlB"/>
    <property type="match status" value="1"/>
</dbReference>
<dbReference type="SUPFAM" id="SSF53807">
    <property type="entry name" value="Helical backbone' metal receptor"/>
    <property type="match status" value="1"/>
</dbReference>
<proteinExistence type="inferred from homology"/>
<organism>
    <name type="scientific">Nostoc sp. (strain PCC 7120 / SAG 25.82 / UTEX 2576)</name>
    <dbReference type="NCBI Taxonomy" id="103690"/>
    <lineage>
        <taxon>Bacteria</taxon>
        <taxon>Bacillati</taxon>
        <taxon>Cyanobacteriota</taxon>
        <taxon>Cyanophyceae</taxon>
        <taxon>Nostocales</taxon>
        <taxon>Nostocaceae</taxon>
        <taxon>Nostoc</taxon>
    </lineage>
</organism>
<name>CHLB_NOSS1</name>
<protein>
    <recommendedName>
        <fullName evidence="1">Light-independent protochlorophyllide reductase subunit B</fullName>
        <shortName evidence="1">DPOR subunit B</shortName>
        <shortName evidence="1">LI-POR subunit B</shortName>
        <ecNumber evidence="1">1.3.7.7</ecNumber>
    </recommendedName>
</protein>
<evidence type="ECO:0000255" key="1">
    <source>
        <dbReference type="HAMAP-Rule" id="MF_00353"/>
    </source>
</evidence>
<feature type="chain" id="PRO_0000219803" description="Light-independent protochlorophyllide reductase subunit B">
    <location>
        <begin position="1"/>
        <end position="508"/>
    </location>
</feature>
<feature type="active site" description="Proton donor" evidence="1">
    <location>
        <position position="294"/>
    </location>
</feature>
<feature type="binding site" evidence="1">
    <location>
        <position position="36"/>
    </location>
    <ligand>
        <name>[4Fe-4S] cluster</name>
        <dbReference type="ChEBI" id="CHEBI:49883"/>
        <note>ligand shared with heterodimeric partner</note>
    </ligand>
</feature>
<feature type="binding site" evidence="1">
    <location>
        <begin position="429"/>
        <end position="430"/>
    </location>
    <ligand>
        <name>substrate</name>
    </ligand>
</feature>
<reference key="1">
    <citation type="journal article" date="2001" name="DNA Res.">
        <title>Complete genomic sequence of the filamentous nitrogen-fixing cyanobacterium Anabaena sp. strain PCC 7120.</title>
        <authorList>
            <person name="Kaneko T."/>
            <person name="Nakamura Y."/>
            <person name="Wolk C.P."/>
            <person name="Kuritz T."/>
            <person name="Sasamoto S."/>
            <person name="Watanabe A."/>
            <person name="Iriguchi M."/>
            <person name="Ishikawa A."/>
            <person name="Kawashima K."/>
            <person name="Kimura T."/>
            <person name="Kishida Y."/>
            <person name="Kohara M."/>
            <person name="Matsumoto M."/>
            <person name="Matsuno A."/>
            <person name="Muraki A."/>
            <person name="Nakazaki N."/>
            <person name="Shimpo S."/>
            <person name="Sugimoto M."/>
            <person name="Takazawa M."/>
            <person name="Yamada M."/>
            <person name="Yasuda M."/>
            <person name="Tabata S."/>
        </authorList>
    </citation>
    <scope>NUCLEOTIDE SEQUENCE [LARGE SCALE GENOMIC DNA]</scope>
    <source>
        <strain>PCC 7120 / SAG 25.82 / UTEX 2576</strain>
    </source>
</reference>
<sequence>MKLAYWMYAGPAHIGTLRVATSFKNVHAIMHAPLGDDYFNVMRSMLSRERDFTPVTTSVVDRHVLARGSQEKVVDNITRKDAEERPDLIVLTPTCTSSILQEDLENFVERAQLEAKGDVLLADVNHYRVNELQAGDRTLHQIVQYYIEKARKKGELPEGKTAKPSVNIIGISTLGFHNNHDCTELKRLMADLGIEVNAVIPEGASVHELKNLPRAWFNLVPYRELGLMTANYLEKEFGTPCIDIVPMGVVETARCIRKIQEVINAQGADVNYEDYINEQTLYVSQAAWFSRSIDCQNLTGKKAVVFGDNTHAAALTKILSREMGIHVVWAGTYCKYDADWFREQVSEYCDEVLITEDHGEIGDAIARVEPSAIFGTQMERHVGKRLDIPCGVIAAPIHVQNFPIGYKPFLGYEGTNQITDLIYNSFTLGMEDHLLEIFGGHDTKEVITKGISAGSDLSWTKDGLAELNKIPGFVRGKVKRNTEKFARDRGFKDISAEVLYAAKEAVGA</sequence>
<accession>Q8YRK5</accession>